<feature type="chain" id="PRO_0000371474" description="Uncharacterized protein IMPP13">
    <location>
        <begin position="1" status="less than"/>
        <end position="13" status="greater than"/>
    </location>
</feature>
<feature type="unsure residue" description="L or I" evidence="1">
    <location>
        <position position="2"/>
    </location>
</feature>
<feature type="non-terminal residue" evidence="2">
    <location>
        <position position="1"/>
    </location>
</feature>
<feature type="non-terminal residue" evidence="2">
    <location>
        <position position="13"/>
    </location>
</feature>
<accession>P85368</accession>
<protein>
    <recommendedName>
        <fullName evidence="2">Uncharacterized protein IMPP13</fullName>
    </recommendedName>
</protein>
<reference key="1">
    <citation type="journal article" date="2009" name="ChemBioChem">
        <title>Evolution of nacre: biochemistry and 'shellomics' of the shell organic matrix of the cephalopod Nautilus macromphalus.</title>
        <authorList>
            <person name="Marie B."/>
            <person name="Marin F."/>
            <person name="Marie A."/>
            <person name="Bedouet L."/>
            <person name="Dubost L."/>
            <person name="Alcaraz G."/>
            <person name="Milet C."/>
            <person name="Luquet G."/>
        </authorList>
    </citation>
    <scope>PROTEIN SEQUENCE</scope>
    <scope>TISSUE SPECIFICITY</scope>
    <source>
        <tissue>Shell</tissue>
    </source>
</reference>
<keyword id="KW-0903">Direct protein sequencing</keyword>
<name>IMP13_NAUMA</name>
<comment type="tissue specificity">
    <text evidence="1">Nacreous layer of shell.</text>
</comment>
<sequence>ALVSADGDSWFAR</sequence>
<organism>
    <name type="scientific">Nautilus macromphalus</name>
    <name type="common">Bellybutton nautilus</name>
    <dbReference type="NCBI Taxonomy" id="34576"/>
    <lineage>
        <taxon>Eukaryota</taxon>
        <taxon>Metazoa</taxon>
        <taxon>Spiralia</taxon>
        <taxon>Lophotrochozoa</taxon>
        <taxon>Mollusca</taxon>
        <taxon>Cephalopoda</taxon>
        <taxon>Nautiloidea</taxon>
        <taxon>Nautilida</taxon>
        <taxon>Nautilidae</taxon>
        <taxon>Nautilus</taxon>
    </lineage>
</organism>
<proteinExistence type="evidence at protein level"/>
<evidence type="ECO:0000269" key="1">
    <source>
    </source>
</evidence>
<evidence type="ECO:0000303" key="2">
    <source>
    </source>
</evidence>